<sequence length="197" mass="21930">MSEMLNHVASCRLPTEWGVFTMHGFEEANGQEHVALTVGNFSDGNPVLTRIHSECLTGDALFSRKCDCGPQLEAAMRAVQTEGRGIIVYLRQEGRGIGLINKIRAYHLQDQGMDTVEANLALGLPVDARDFRLAQSIYEYLGIRSVKLLTNNPEKIQTLKDAGINVVERIPLHVGENLENKRYLQTKADKLGHLMSE</sequence>
<organism>
    <name type="scientific">Neisseria meningitidis serogroup B (strain ATCC BAA-335 / MC58)</name>
    <dbReference type="NCBI Taxonomy" id="122586"/>
    <lineage>
        <taxon>Bacteria</taxon>
        <taxon>Pseudomonadati</taxon>
        <taxon>Pseudomonadota</taxon>
        <taxon>Betaproteobacteria</taxon>
        <taxon>Neisseriales</taxon>
        <taxon>Neisseriaceae</taxon>
        <taxon>Neisseria</taxon>
    </lineage>
</organism>
<comment type="function">
    <text evidence="1">Catalyzes the conversion of GTP to 2,5-diamino-6-ribosylamino-4(3H)-pyrimidinone 5'-phosphate (DARP), formate and pyrophosphate.</text>
</comment>
<comment type="catalytic activity">
    <reaction evidence="1">
        <text>GTP + 4 H2O = 2,5-diamino-6-hydroxy-4-(5-phosphoribosylamino)-pyrimidine + formate + 2 phosphate + 3 H(+)</text>
        <dbReference type="Rhea" id="RHEA:23704"/>
        <dbReference type="ChEBI" id="CHEBI:15377"/>
        <dbReference type="ChEBI" id="CHEBI:15378"/>
        <dbReference type="ChEBI" id="CHEBI:15740"/>
        <dbReference type="ChEBI" id="CHEBI:37565"/>
        <dbReference type="ChEBI" id="CHEBI:43474"/>
        <dbReference type="ChEBI" id="CHEBI:58614"/>
        <dbReference type="EC" id="3.5.4.25"/>
    </reaction>
</comment>
<comment type="cofactor">
    <cofactor evidence="1">
        <name>Zn(2+)</name>
        <dbReference type="ChEBI" id="CHEBI:29105"/>
    </cofactor>
    <text evidence="1">Binds 1 zinc ion per subunit.</text>
</comment>
<comment type="pathway">
    <text evidence="1">Cofactor biosynthesis; riboflavin biosynthesis; 5-amino-6-(D-ribitylamino)uracil from GTP: step 1/4.</text>
</comment>
<comment type="similarity">
    <text evidence="1">Belongs to the GTP cyclohydrolase II family.</text>
</comment>
<protein>
    <recommendedName>
        <fullName evidence="1">GTP cyclohydrolase-2</fullName>
        <ecNumber evidence="1">3.5.4.25</ecNumber>
    </recommendedName>
    <alternativeName>
        <fullName evidence="1">GTP cyclohydrolase II</fullName>
    </alternativeName>
</protein>
<name>RIBA_NEIMB</name>
<keyword id="KW-0342">GTP-binding</keyword>
<keyword id="KW-0378">Hydrolase</keyword>
<keyword id="KW-0479">Metal-binding</keyword>
<keyword id="KW-0547">Nucleotide-binding</keyword>
<keyword id="KW-1185">Reference proteome</keyword>
<keyword id="KW-0686">Riboflavin biosynthesis</keyword>
<keyword id="KW-0862">Zinc</keyword>
<reference key="1">
    <citation type="journal article" date="2000" name="Science">
        <title>Complete genome sequence of Neisseria meningitidis serogroup B strain MC58.</title>
        <authorList>
            <person name="Tettelin H."/>
            <person name="Saunders N.J."/>
            <person name="Heidelberg J.F."/>
            <person name="Jeffries A.C."/>
            <person name="Nelson K.E."/>
            <person name="Eisen J.A."/>
            <person name="Ketchum K.A."/>
            <person name="Hood D.W."/>
            <person name="Peden J.F."/>
            <person name="Dodson R.J."/>
            <person name="Nelson W.C."/>
            <person name="Gwinn M.L."/>
            <person name="DeBoy R.T."/>
            <person name="Peterson J.D."/>
            <person name="Hickey E.K."/>
            <person name="Haft D.H."/>
            <person name="Salzberg S.L."/>
            <person name="White O."/>
            <person name="Fleischmann R.D."/>
            <person name="Dougherty B.A."/>
            <person name="Mason T.M."/>
            <person name="Ciecko A."/>
            <person name="Parksey D.S."/>
            <person name="Blair E."/>
            <person name="Cittone H."/>
            <person name="Clark E.B."/>
            <person name="Cotton M.D."/>
            <person name="Utterback T.R."/>
            <person name="Khouri H.M."/>
            <person name="Qin H."/>
            <person name="Vamathevan J.J."/>
            <person name="Gill J."/>
            <person name="Scarlato V."/>
            <person name="Masignani V."/>
            <person name="Pizza M."/>
            <person name="Grandi G."/>
            <person name="Sun L."/>
            <person name="Smith H.O."/>
            <person name="Fraser C.M."/>
            <person name="Moxon E.R."/>
            <person name="Rappuoli R."/>
            <person name="Venter J.C."/>
        </authorList>
    </citation>
    <scope>NUCLEOTIDE SEQUENCE [LARGE SCALE GENOMIC DNA]</scope>
    <source>
        <strain>ATCC BAA-335 / MC58</strain>
    </source>
</reference>
<proteinExistence type="inferred from homology"/>
<gene>
    <name evidence="1" type="primary">ribA</name>
    <name type="ordered locus">NMB1254</name>
</gene>
<evidence type="ECO:0000255" key="1">
    <source>
        <dbReference type="HAMAP-Rule" id="MF_00179"/>
    </source>
</evidence>
<dbReference type="EC" id="3.5.4.25" evidence="1"/>
<dbReference type="EMBL" id="AE002098">
    <property type="protein sequence ID" value="AAF41634.1"/>
    <property type="molecule type" value="Genomic_DNA"/>
</dbReference>
<dbReference type="PIR" id="G81104">
    <property type="entry name" value="G81104"/>
</dbReference>
<dbReference type="RefSeq" id="NP_274277.1">
    <property type="nucleotide sequence ID" value="NC_003112.2"/>
</dbReference>
<dbReference type="RefSeq" id="WP_002220947.1">
    <property type="nucleotide sequence ID" value="NC_003112.2"/>
</dbReference>
<dbReference type="SMR" id="Q9JZ78"/>
<dbReference type="FunCoup" id="Q9JZ78">
    <property type="interactions" value="123"/>
</dbReference>
<dbReference type="STRING" id="122586.NMB1254"/>
<dbReference type="PaxDb" id="122586-NMB1254"/>
<dbReference type="GeneID" id="93385976"/>
<dbReference type="KEGG" id="nme:NMB1254"/>
<dbReference type="PATRIC" id="fig|122586.8.peg.1568"/>
<dbReference type="HOGENOM" id="CLU_020273_2_1_4"/>
<dbReference type="InParanoid" id="Q9JZ78"/>
<dbReference type="OrthoDB" id="9793111at2"/>
<dbReference type="UniPathway" id="UPA00275">
    <property type="reaction ID" value="UER00400"/>
</dbReference>
<dbReference type="Proteomes" id="UP000000425">
    <property type="component" value="Chromosome"/>
</dbReference>
<dbReference type="GO" id="GO:0005829">
    <property type="term" value="C:cytosol"/>
    <property type="evidence" value="ECO:0000318"/>
    <property type="project" value="GO_Central"/>
</dbReference>
<dbReference type="GO" id="GO:0005525">
    <property type="term" value="F:GTP binding"/>
    <property type="evidence" value="ECO:0007669"/>
    <property type="project" value="UniProtKB-KW"/>
</dbReference>
<dbReference type="GO" id="GO:0003935">
    <property type="term" value="F:GTP cyclohydrolase II activity"/>
    <property type="evidence" value="ECO:0000318"/>
    <property type="project" value="GO_Central"/>
</dbReference>
<dbReference type="GO" id="GO:0008270">
    <property type="term" value="F:zinc ion binding"/>
    <property type="evidence" value="ECO:0007669"/>
    <property type="project" value="UniProtKB-UniRule"/>
</dbReference>
<dbReference type="GO" id="GO:0009231">
    <property type="term" value="P:riboflavin biosynthetic process"/>
    <property type="evidence" value="ECO:0000318"/>
    <property type="project" value="GO_Central"/>
</dbReference>
<dbReference type="CDD" id="cd00641">
    <property type="entry name" value="GTP_cyclohydro2"/>
    <property type="match status" value="1"/>
</dbReference>
<dbReference type="FunFam" id="3.40.50.10990:FF:000002">
    <property type="entry name" value="GTP cyclohydrolase-2"/>
    <property type="match status" value="1"/>
</dbReference>
<dbReference type="Gene3D" id="3.40.50.10990">
    <property type="entry name" value="GTP cyclohydrolase II"/>
    <property type="match status" value="1"/>
</dbReference>
<dbReference type="HAMAP" id="MF_00179">
    <property type="entry name" value="RibA"/>
    <property type="match status" value="1"/>
</dbReference>
<dbReference type="InterPro" id="IPR032677">
    <property type="entry name" value="GTP_cyclohydro_II"/>
</dbReference>
<dbReference type="InterPro" id="IPR000926">
    <property type="entry name" value="RibA"/>
</dbReference>
<dbReference type="InterPro" id="IPR036144">
    <property type="entry name" value="RibA-like_sf"/>
</dbReference>
<dbReference type="NCBIfam" id="NF001591">
    <property type="entry name" value="PRK00393.1"/>
    <property type="match status" value="1"/>
</dbReference>
<dbReference type="NCBIfam" id="TIGR00505">
    <property type="entry name" value="ribA"/>
    <property type="match status" value="1"/>
</dbReference>
<dbReference type="PANTHER" id="PTHR21327:SF18">
    <property type="entry name" value="3,4-DIHYDROXY-2-BUTANONE 4-PHOSPHATE SYNTHASE"/>
    <property type="match status" value="1"/>
</dbReference>
<dbReference type="PANTHER" id="PTHR21327">
    <property type="entry name" value="GTP CYCLOHYDROLASE II-RELATED"/>
    <property type="match status" value="1"/>
</dbReference>
<dbReference type="Pfam" id="PF00925">
    <property type="entry name" value="GTP_cyclohydro2"/>
    <property type="match status" value="1"/>
</dbReference>
<dbReference type="SUPFAM" id="SSF142695">
    <property type="entry name" value="RibA-like"/>
    <property type="match status" value="1"/>
</dbReference>
<feature type="chain" id="PRO_0000151765" description="GTP cyclohydrolase-2">
    <location>
        <begin position="1"/>
        <end position="197"/>
    </location>
</feature>
<feature type="active site" description="Proton acceptor" evidence="1">
    <location>
        <position position="127"/>
    </location>
</feature>
<feature type="active site" description="Nucleophile" evidence="1">
    <location>
        <position position="129"/>
    </location>
</feature>
<feature type="binding site" evidence="1">
    <location>
        <begin position="50"/>
        <end position="54"/>
    </location>
    <ligand>
        <name>GTP</name>
        <dbReference type="ChEBI" id="CHEBI:37565"/>
    </ligand>
</feature>
<feature type="binding site" evidence="1">
    <location>
        <position position="55"/>
    </location>
    <ligand>
        <name>Zn(2+)</name>
        <dbReference type="ChEBI" id="CHEBI:29105"/>
        <note>catalytic</note>
    </ligand>
</feature>
<feature type="binding site" evidence="1">
    <location>
        <position position="66"/>
    </location>
    <ligand>
        <name>Zn(2+)</name>
        <dbReference type="ChEBI" id="CHEBI:29105"/>
        <note>catalytic</note>
    </ligand>
</feature>
<feature type="binding site" evidence="1">
    <location>
        <position position="68"/>
    </location>
    <ligand>
        <name>Zn(2+)</name>
        <dbReference type="ChEBI" id="CHEBI:29105"/>
        <note>catalytic</note>
    </ligand>
</feature>
<feature type="binding site" evidence="1">
    <location>
        <position position="71"/>
    </location>
    <ligand>
        <name>GTP</name>
        <dbReference type="ChEBI" id="CHEBI:37565"/>
    </ligand>
</feature>
<feature type="binding site" evidence="1">
    <location>
        <begin position="93"/>
        <end position="95"/>
    </location>
    <ligand>
        <name>GTP</name>
        <dbReference type="ChEBI" id="CHEBI:37565"/>
    </ligand>
</feature>
<feature type="binding site" evidence="1">
    <location>
        <position position="115"/>
    </location>
    <ligand>
        <name>GTP</name>
        <dbReference type="ChEBI" id="CHEBI:37565"/>
    </ligand>
</feature>
<feature type="binding site" evidence="1">
    <location>
        <position position="150"/>
    </location>
    <ligand>
        <name>GTP</name>
        <dbReference type="ChEBI" id="CHEBI:37565"/>
    </ligand>
</feature>
<feature type="binding site" evidence="1">
    <location>
        <position position="155"/>
    </location>
    <ligand>
        <name>GTP</name>
        <dbReference type="ChEBI" id="CHEBI:37565"/>
    </ligand>
</feature>
<accession>Q9JZ78</accession>